<name>UPPP_ECTM1</name>
<gene>
    <name evidence="1" type="primary">uppP</name>
    <name type="ordered locus">Pmen_2175</name>
</gene>
<keyword id="KW-0046">Antibiotic resistance</keyword>
<keyword id="KW-0997">Cell inner membrane</keyword>
<keyword id="KW-1003">Cell membrane</keyword>
<keyword id="KW-0133">Cell shape</keyword>
<keyword id="KW-0961">Cell wall biogenesis/degradation</keyword>
<keyword id="KW-0378">Hydrolase</keyword>
<keyword id="KW-0472">Membrane</keyword>
<keyword id="KW-0573">Peptidoglycan synthesis</keyword>
<keyword id="KW-0812">Transmembrane</keyword>
<keyword id="KW-1133">Transmembrane helix</keyword>
<protein>
    <recommendedName>
        <fullName evidence="1">Undecaprenyl-diphosphatase</fullName>
        <ecNumber evidence="1">3.6.1.27</ecNumber>
    </recommendedName>
    <alternativeName>
        <fullName evidence="1">Bacitracin resistance protein</fullName>
    </alternativeName>
    <alternativeName>
        <fullName evidence="1">Undecaprenyl pyrophosphate phosphatase</fullName>
    </alternativeName>
</protein>
<proteinExistence type="inferred from homology"/>
<accession>A4XUB9</accession>
<reference key="1">
    <citation type="submission" date="2007-04" db="EMBL/GenBank/DDBJ databases">
        <title>Complete sequence of Pseudomonas mendocina ymp.</title>
        <authorList>
            <consortium name="US DOE Joint Genome Institute"/>
            <person name="Copeland A."/>
            <person name="Lucas S."/>
            <person name="Lapidus A."/>
            <person name="Barry K."/>
            <person name="Glavina del Rio T."/>
            <person name="Dalin E."/>
            <person name="Tice H."/>
            <person name="Pitluck S."/>
            <person name="Kiss H."/>
            <person name="Brettin T."/>
            <person name="Detter J.C."/>
            <person name="Bruce D."/>
            <person name="Han C."/>
            <person name="Schmutz J."/>
            <person name="Larimer F."/>
            <person name="Land M."/>
            <person name="Hauser L."/>
            <person name="Kyrpides N."/>
            <person name="Mikhailova N."/>
            <person name="Hersman L."/>
            <person name="Dubois J."/>
            <person name="Maurice P."/>
            <person name="Richardson P."/>
        </authorList>
    </citation>
    <scope>NUCLEOTIDE SEQUENCE [LARGE SCALE GENOMIC DNA]</scope>
    <source>
        <strain>ymp</strain>
    </source>
</reference>
<comment type="function">
    <text evidence="1">Catalyzes the dephosphorylation of undecaprenyl diphosphate (UPP). Confers resistance to bacitracin.</text>
</comment>
<comment type="catalytic activity">
    <reaction evidence="1">
        <text>di-trans,octa-cis-undecaprenyl diphosphate + H2O = di-trans,octa-cis-undecaprenyl phosphate + phosphate + H(+)</text>
        <dbReference type="Rhea" id="RHEA:28094"/>
        <dbReference type="ChEBI" id="CHEBI:15377"/>
        <dbReference type="ChEBI" id="CHEBI:15378"/>
        <dbReference type="ChEBI" id="CHEBI:43474"/>
        <dbReference type="ChEBI" id="CHEBI:58405"/>
        <dbReference type="ChEBI" id="CHEBI:60392"/>
        <dbReference type="EC" id="3.6.1.27"/>
    </reaction>
</comment>
<comment type="subcellular location">
    <subcellularLocation>
        <location evidence="1">Cell inner membrane</location>
        <topology evidence="1">Multi-pass membrane protein</topology>
    </subcellularLocation>
</comment>
<comment type="miscellaneous">
    <text>Bacitracin is thought to be involved in the inhibition of peptidoglycan synthesis by sequestering undecaprenyl diphosphate, thereby reducing the pool of lipid carrier available.</text>
</comment>
<comment type="similarity">
    <text evidence="1">Belongs to the UppP family.</text>
</comment>
<feature type="chain" id="PRO_1000062808" description="Undecaprenyl-diphosphatase">
    <location>
        <begin position="1"/>
        <end position="276"/>
    </location>
</feature>
<feature type="transmembrane region" description="Helical" evidence="1">
    <location>
        <begin position="12"/>
        <end position="34"/>
    </location>
</feature>
<feature type="transmembrane region" description="Helical" evidence="1">
    <location>
        <begin position="43"/>
        <end position="63"/>
    </location>
</feature>
<feature type="transmembrane region" description="Helical" evidence="1">
    <location>
        <begin position="85"/>
        <end position="105"/>
    </location>
</feature>
<feature type="transmembrane region" description="Helical" evidence="1">
    <location>
        <begin position="108"/>
        <end position="128"/>
    </location>
</feature>
<feature type="transmembrane region" description="Helical" evidence="1">
    <location>
        <begin position="185"/>
        <end position="205"/>
    </location>
</feature>
<feature type="transmembrane region" description="Helical" evidence="1">
    <location>
        <begin position="218"/>
        <end position="238"/>
    </location>
</feature>
<feature type="transmembrane region" description="Helical" evidence="1">
    <location>
        <begin position="249"/>
        <end position="269"/>
    </location>
</feature>
<sequence length="276" mass="30473">MDIWMAFQALILGIVEGLTEFLPISSTGHLIVVGDLLGFNGETATAFKIIIQLGAILAVMWEFRARVLGVVLGLRSEPRAQRFTFNLLLAFIPAVVFGLAFADLIEHWLFNPITVATALIVGGIIMLWAEKREHAIQAESVDDMTWKLALKVGFAQCLALIPGTSRSGATIIGGLVFGLSRKAATEFSFFLAMPTMIAATVYSLFKYRDILQWSDLPIFAIGFVSTFIVAMITVRALLKFIANHSYAVFAWYRIAFGLVILATWQLHLIDWSTAQP</sequence>
<organism>
    <name type="scientific">Ectopseudomonas mendocina (strain ymp)</name>
    <name type="common">Pseudomonas mendocina</name>
    <dbReference type="NCBI Taxonomy" id="399739"/>
    <lineage>
        <taxon>Bacteria</taxon>
        <taxon>Pseudomonadati</taxon>
        <taxon>Pseudomonadota</taxon>
        <taxon>Gammaproteobacteria</taxon>
        <taxon>Pseudomonadales</taxon>
        <taxon>Pseudomonadaceae</taxon>
        <taxon>Ectopseudomonas</taxon>
    </lineage>
</organism>
<evidence type="ECO:0000255" key="1">
    <source>
        <dbReference type="HAMAP-Rule" id="MF_01006"/>
    </source>
</evidence>
<dbReference type="EC" id="3.6.1.27" evidence="1"/>
<dbReference type="EMBL" id="CP000680">
    <property type="protein sequence ID" value="ABP84935.1"/>
    <property type="molecule type" value="Genomic_DNA"/>
</dbReference>
<dbReference type="SMR" id="A4XUB9"/>
<dbReference type="STRING" id="399739.Pmen_2175"/>
<dbReference type="KEGG" id="pmy:Pmen_2175"/>
<dbReference type="PATRIC" id="fig|399739.8.peg.2200"/>
<dbReference type="eggNOG" id="COG1968">
    <property type="taxonomic scope" value="Bacteria"/>
</dbReference>
<dbReference type="HOGENOM" id="CLU_060296_2_0_6"/>
<dbReference type="OrthoDB" id="9808289at2"/>
<dbReference type="GO" id="GO:0005886">
    <property type="term" value="C:plasma membrane"/>
    <property type="evidence" value="ECO:0007669"/>
    <property type="project" value="UniProtKB-SubCell"/>
</dbReference>
<dbReference type="GO" id="GO:0050380">
    <property type="term" value="F:undecaprenyl-diphosphatase activity"/>
    <property type="evidence" value="ECO:0007669"/>
    <property type="project" value="UniProtKB-UniRule"/>
</dbReference>
<dbReference type="GO" id="GO:0071555">
    <property type="term" value="P:cell wall organization"/>
    <property type="evidence" value="ECO:0007669"/>
    <property type="project" value="UniProtKB-KW"/>
</dbReference>
<dbReference type="GO" id="GO:0009252">
    <property type="term" value="P:peptidoglycan biosynthetic process"/>
    <property type="evidence" value="ECO:0007669"/>
    <property type="project" value="UniProtKB-KW"/>
</dbReference>
<dbReference type="GO" id="GO:0008360">
    <property type="term" value="P:regulation of cell shape"/>
    <property type="evidence" value="ECO:0007669"/>
    <property type="project" value="UniProtKB-KW"/>
</dbReference>
<dbReference type="GO" id="GO:0046677">
    <property type="term" value="P:response to antibiotic"/>
    <property type="evidence" value="ECO:0007669"/>
    <property type="project" value="UniProtKB-UniRule"/>
</dbReference>
<dbReference type="HAMAP" id="MF_01006">
    <property type="entry name" value="Undec_diphosphatase"/>
    <property type="match status" value="1"/>
</dbReference>
<dbReference type="InterPro" id="IPR003824">
    <property type="entry name" value="UppP"/>
</dbReference>
<dbReference type="NCBIfam" id="NF001389">
    <property type="entry name" value="PRK00281.1-2"/>
    <property type="match status" value="1"/>
</dbReference>
<dbReference type="NCBIfam" id="NF001390">
    <property type="entry name" value="PRK00281.1-4"/>
    <property type="match status" value="1"/>
</dbReference>
<dbReference type="NCBIfam" id="TIGR00753">
    <property type="entry name" value="undec_PP_bacA"/>
    <property type="match status" value="1"/>
</dbReference>
<dbReference type="PANTHER" id="PTHR30622">
    <property type="entry name" value="UNDECAPRENYL-DIPHOSPHATASE"/>
    <property type="match status" value="1"/>
</dbReference>
<dbReference type="PANTHER" id="PTHR30622:SF3">
    <property type="entry name" value="UNDECAPRENYL-DIPHOSPHATASE"/>
    <property type="match status" value="1"/>
</dbReference>
<dbReference type="Pfam" id="PF02673">
    <property type="entry name" value="BacA"/>
    <property type="match status" value="1"/>
</dbReference>